<protein>
    <recommendedName>
        <fullName evidence="1">tRNA N6-adenosine threonylcarbamoyltransferase</fullName>
        <ecNumber evidence="1">2.3.1.234</ecNumber>
    </recommendedName>
    <alternativeName>
        <fullName evidence="1">N6-L-threonylcarbamoyladenine synthase</fullName>
        <shortName evidence="1">t(6)A synthase</shortName>
    </alternativeName>
    <alternativeName>
        <fullName evidence="1">t(6)A37 threonylcarbamoyladenosine biosynthesis protein TsaD</fullName>
    </alternativeName>
    <alternativeName>
        <fullName evidence="1">tRNA threonylcarbamoyladenosine biosynthesis protein TsaD</fullName>
    </alternativeName>
</protein>
<comment type="function">
    <text evidence="1">Required for the formation of a threonylcarbamoyl group on adenosine at position 37 (t(6)A37) in tRNAs that read codons beginning with adenine. Is involved in the transfer of the threonylcarbamoyl moiety of threonylcarbamoyl-AMP (TC-AMP) to the N6 group of A37, together with TsaE and TsaB. TsaD likely plays a direct catalytic role in this reaction.</text>
</comment>
<comment type="catalytic activity">
    <reaction evidence="1">
        <text>L-threonylcarbamoyladenylate + adenosine(37) in tRNA = N(6)-L-threonylcarbamoyladenosine(37) in tRNA + AMP + H(+)</text>
        <dbReference type="Rhea" id="RHEA:37059"/>
        <dbReference type="Rhea" id="RHEA-COMP:10162"/>
        <dbReference type="Rhea" id="RHEA-COMP:10163"/>
        <dbReference type="ChEBI" id="CHEBI:15378"/>
        <dbReference type="ChEBI" id="CHEBI:73682"/>
        <dbReference type="ChEBI" id="CHEBI:74411"/>
        <dbReference type="ChEBI" id="CHEBI:74418"/>
        <dbReference type="ChEBI" id="CHEBI:456215"/>
        <dbReference type="EC" id="2.3.1.234"/>
    </reaction>
</comment>
<comment type="cofactor">
    <cofactor evidence="1">
        <name>Fe(2+)</name>
        <dbReference type="ChEBI" id="CHEBI:29033"/>
    </cofactor>
    <text evidence="1">Binds 1 Fe(2+) ion per subunit.</text>
</comment>
<comment type="subcellular location">
    <subcellularLocation>
        <location evidence="1">Cytoplasm</location>
    </subcellularLocation>
</comment>
<comment type="similarity">
    <text evidence="1">Belongs to the KAE1 / TsaD family.</text>
</comment>
<gene>
    <name evidence="1" type="primary">tsaD</name>
    <name type="synonym">gcp</name>
    <name type="ordered locus">SpyM50260</name>
</gene>
<sequence length="342" mass="36931">MTDRYILAVESSCDETSVAILKNESTLLSNVIASQVESHKRFGGVVPEVASRHHVEVITTCFEDALQEAGISASDLSAVAVTYGPGLVGALLVGLAAAKAFAWANHLPLIPVNHMAGHLMAAREQKPLVYPLIALLVSGGHTELVYVPEPGDYHIIGETRDDAVGEAYDKVGRVMGLTYPAGREIDQLAHKGQDTYHFPRAMITEDHLEFSFSGLKSAFINLHHNAKQKGDELILEDLCASFQAAVLDILLAKTKKALSRYPAKMLVVAGGVAANQGLRDRLAQEITHIEVVIPKLRLCGDNAGMIALAAAIEYDKQHFANMSLNAKPSLAFDQFPDSFVIN</sequence>
<accession>A2RCM9</accession>
<feature type="chain" id="PRO_0000303572" description="tRNA N6-adenosine threonylcarbamoyltransferase">
    <location>
        <begin position="1"/>
        <end position="342"/>
    </location>
</feature>
<feature type="binding site" evidence="1">
    <location>
        <position position="114"/>
    </location>
    <ligand>
        <name>Fe cation</name>
        <dbReference type="ChEBI" id="CHEBI:24875"/>
    </ligand>
</feature>
<feature type="binding site" evidence="1">
    <location>
        <position position="118"/>
    </location>
    <ligand>
        <name>Fe cation</name>
        <dbReference type="ChEBI" id="CHEBI:24875"/>
    </ligand>
</feature>
<feature type="binding site" evidence="1">
    <location>
        <begin position="136"/>
        <end position="140"/>
    </location>
    <ligand>
        <name>substrate</name>
    </ligand>
</feature>
<feature type="binding site" evidence="1">
    <location>
        <position position="169"/>
    </location>
    <ligand>
        <name>substrate</name>
    </ligand>
</feature>
<feature type="binding site" evidence="1">
    <location>
        <position position="182"/>
    </location>
    <ligand>
        <name>substrate</name>
    </ligand>
</feature>
<feature type="binding site" evidence="1">
    <location>
        <position position="186"/>
    </location>
    <ligand>
        <name>substrate</name>
    </ligand>
</feature>
<feature type="binding site" evidence="1">
    <location>
        <position position="275"/>
    </location>
    <ligand>
        <name>substrate</name>
    </ligand>
</feature>
<feature type="binding site" evidence="1">
    <location>
        <position position="301"/>
    </location>
    <ligand>
        <name>Fe cation</name>
        <dbReference type="ChEBI" id="CHEBI:24875"/>
    </ligand>
</feature>
<name>TSAD_STRPG</name>
<proteinExistence type="inferred from homology"/>
<evidence type="ECO:0000255" key="1">
    <source>
        <dbReference type="HAMAP-Rule" id="MF_01445"/>
    </source>
</evidence>
<reference key="1">
    <citation type="journal article" date="2007" name="J. Bacteriol.">
        <title>Complete genome of acute rheumatic fever-associated serotype M5 Streptococcus pyogenes strain Manfredo.</title>
        <authorList>
            <person name="Holden M.T.G."/>
            <person name="Scott A."/>
            <person name="Cherevach I."/>
            <person name="Chillingworth T."/>
            <person name="Churcher C."/>
            <person name="Cronin A."/>
            <person name="Dowd L."/>
            <person name="Feltwell T."/>
            <person name="Hamlin N."/>
            <person name="Holroyd S."/>
            <person name="Jagels K."/>
            <person name="Moule S."/>
            <person name="Mungall K."/>
            <person name="Quail M.A."/>
            <person name="Price C."/>
            <person name="Rabbinowitsch E."/>
            <person name="Sharp S."/>
            <person name="Skelton J."/>
            <person name="Whitehead S."/>
            <person name="Barrell B.G."/>
            <person name="Kehoe M."/>
            <person name="Parkhill J."/>
        </authorList>
    </citation>
    <scope>NUCLEOTIDE SEQUENCE [LARGE SCALE GENOMIC DNA]</scope>
    <source>
        <strain>Manfredo</strain>
    </source>
</reference>
<dbReference type="EC" id="2.3.1.234" evidence="1"/>
<dbReference type="EMBL" id="AM295007">
    <property type="protein sequence ID" value="CAM29602.1"/>
    <property type="molecule type" value="Genomic_DNA"/>
</dbReference>
<dbReference type="RefSeq" id="WP_002988178.1">
    <property type="nucleotide sequence ID" value="NC_009332.1"/>
</dbReference>
<dbReference type="SMR" id="A2RCM9"/>
<dbReference type="GeneID" id="69900251"/>
<dbReference type="KEGG" id="spf:SpyM50260"/>
<dbReference type="HOGENOM" id="CLU_023208_0_2_9"/>
<dbReference type="GO" id="GO:0005737">
    <property type="term" value="C:cytoplasm"/>
    <property type="evidence" value="ECO:0007669"/>
    <property type="project" value="UniProtKB-SubCell"/>
</dbReference>
<dbReference type="GO" id="GO:0005506">
    <property type="term" value="F:iron ion binding"/>
    <property type="evidence" value="ECO:0007669"/>
    <property type="project" value="UniProtKB-UniRule"/>
</dbReference>
<dbReference type="GO" id="GO:0061711">
    <property type="term" value="F:N(6)-L-threonylcarbamoyladenine synthase activity"/>
    <property type="evidence" value="ECO:0007669"/>
    <property type="project" value="UniProtKB-EC"/>
</dbReference>
<dbReference type="GO" id="GO:0002949">
    <property type="term" value="P:tRNA threonylcarbamoyladenosine modification"/>
    <property type="evidence" value="ECO:0007669"/>
    <property type="project" value="UniProtKB-UniRule"/>
</dbReference>
<dbReference type="CDD" id="cd24133">
    <property type="entry name" value="ASKHA_NBD_TsaD_bac"/>
    <property type="match status" value="1"/>
</dbReference>
<dbReference type="FunFam" id="3.30.420.40:FF:000012">
    <property type="entry name" value="tRNA N6-adenosine threonylcarbamoyltransferase"/>
    <property type="match status" value="1"/>
</dbReference>
<dbReference type="FunFam" id="3.30.420.40:FF:000040">
    <property type="entry name" value="tRNA N6-adenosine threonylcarbamoyltransferase"/>
    <property type="match status" value="1"/>
</dbReference>
<dbReference type="Gene3D" id="3.30.420.40">
    <property type="match status" value="2"/>
</dbReference>
<dbReference type="HAMAP" id="MF_01445">
    <property type="entry name" value="TsaD"/>
    <property type="match status" value="1"/>
</dbReference>
<dbReference type="InterPro" id="IPR043129">
    <property type="entry name" value="ATPase_NBD"/>
</dbReference>
<dbReference type="InterPro" id="IPR000905">
    <property type="entry name" value="Gcp-like_dom"/>
</dbReference>
<dbReference type="InterPro" id="IPR017861">
    <property type="entry name" value="KAE1/TsaD"/>
</dbReference>
<dbReference type="InterPro" id="IPR022450">
    <property type="entry name" value="TsaD"/>
</dbReference>
<dbReference type="NCBIfam" id="TIGR00329">
    <property type="entry name" value="gcp_kae1"/>
    <property type="match status" value="1"/>
</dbReference>
<dbReference type="NCBIfam" id="TIGR03723">
    <property type="entry name" value="T6A_TsaD_YgjD"/>
    <property type="match status" value="1"/>
</dbReference>
<dbReference type="PANTHER" id="PTHR11735">
    <property type="entry name" value="TRNA N6-ADENOSINE THREONYLCARBAMOYLTRANSFERASE"/>
    <property type="match status" value="1"/>
</dbReference>
<dbReference type="PANTHER" id="PTHR11735:SF6">
    <property type="entry name" value="TRNA N6-ADENOSINE THREONYLCARBAMOYLTRANSFERASE, MITOCHONDRIAL"/>
    <property type="match status" value="1"/>
</dbReference>
<dbReference type="Pfam" id="PF00814">
    <property type="entry name" value="TsaD"/>
    <property type="match status" value="1"/>
</dbReference>
<dbReference type="PRINTS" id="PR00789">
    <property type="entry name" value="OSIALOPTASE"/>
</dbReference>
<dbReference type="SUPFAM" id="SSF53067">
    <property type="entry name" value="Actin-like ATPase domain"/>
    <property type="match status" value="1"/>
</dbReference>
<keyword id="KW-0012">Acyltransferase</keyword>
<keyword id="KW-0963">Cytoplasm</keyword>
<keyword id="KW-0408">Iron</keyword>
<keyword id="KW-0479">Metal-binding</keyword>
<keyword id="KW-0808">Transferase</keyword>
<keyword id="KW-0819">tRNA processing</keyword>
<organism>
    <name type="scientific">Streptococcus pyogenes serotype M5 (strain Manfredo)</name>
    <dbReference type="NCBI Taxonomy" id="160491"/>
    <lineage>
        <taxon>Bacteria</taxon>
        <taxon>Bacillati</taxon>
        <taxon>Bacillota</taxon>
        <taxon>Bacilli</taxon>
        <taxon>Lactobacillales</taxon>
        <taxon>Streptococcaceae</taxon>
        <taxon>Streptococcus</taxon>
    </lineage>
</organism>